<accession>Q76KA7</accession>
<proteinExistence type="evidence at protein level"/>
<sequence length="574" mass="66211">MPKFDVSKRDLERLVGKTFSVEEWEDLFLYAKCELDDVWEENGEIYFKADSKDTNRPDLWSAEGIARQIRFALGFQKGLPKYEIEKSDVVVYVDEKLKDIRPYGVYAIVEGLNIDEEALRQMINLQEKVALTFGRRRREVAIGIFDFDKVKPPIYYRAAEKTEKFVPLGYDEEMTLEEILEKHEKGREYGHLIKDKPYYPLLVDSEGKVLSMPPVINSETTGRVTTETKNVFVDITGWDLNKVMLALNVVVTALAERGGKIKSVKVVYPDFEIETPDLTPKEFEVELDYIRKLAGLELSDGEIKELLERMMYEVELENRRAKLRYPAFRDDIMHARDVLEDVLIAYGYNEIEPEEPKLAVQGRGDKFIEFEDAVRELMVGFGLQEVMTFNLTNREAQYDRMNLPCGEHQEECRDYFNHPPAELVEIENPISPKWSALRNWLIPSLLDFLSQNTHEEYPQKLFEVGKATLIDESRETKTVSESKLAVALAHPRVTFTEAKEILEGVMRHLGFEYELEEAEHPSFIPGRVGKIIVNGETIGVIGEIHPAVLENWGIEMPVAAFELFLAPLYTEPYL</sequence>
<name>SYFB_THEKO</name>
<protein>
    <recommendedName>
        <fullName evidence="1">Phenylalanine--tRNA ligase beta subunit</fullName>
        <ecNumber evidence="1">6.1.1.20</ecNumber>
    </recommendedName>
    <alternativeName>
        <fullName evidence="1">Phenylalanyl-tRNA synthetase beta subunit</fullName>
        <shortName evidence="1">PheRS</shortName>
    </alternativeName>
    <alternativeName>
        <fullName>Tk-PheRSB</fullName>
    </alternativeName>
</protein>
<reference key="1">
    <citation type="journal article" date="2003" name="J. Biochem.">
        <title>Genetic, enzymatic, and structural analyses of phenylalanyl-tRNA synthetase from Thermococcus kodakaraensis KOD1.</title>
        <authorList>
            <person name="Shiraki K."/>
            <person name="Tsuji M."/>
            <person name="Hashimoto Y."/>
            <person name="Fujimoto K."/>
            <person name="Fujiwara S."/>
            <person name="Takagi M."/>
            <person name="Imanaka T."/>
        </authorList>
    </citation>
    <scope>NUCLEOTIDE SEQUENCE [GENOMIC DNA]</scope>
    <scope>CHARACTERIZATION</scope>
    <source>
        <strain>ATCC BAA-918 / JCM 12380 / KOD1</strain>
    </source>
</reference>
<reference key="2">
    <citation type="journal article" date="2005" name="Genome Res.">
        <title>Complete genome sequence of the hyperthermophilic archaeon Thermococcus kodakaraensis KOD1 and comparison with Pyrococcus genomes.</title>
        <authorList>
            <person name="Fukui T."/>
            <person name="Atomi H."/>
            <person name="Kanai T."/>
            <person name="Matsumi R."/>
            <person name="Fujiwara S."/>
            <person name="Imanaka T."/>
        </authorList>
    </citation>
    <scope>NUCLEOTIDE SEQUENCE [LARGE SCALE GENOMIC DNA]</scope>
    <source>
        <strain>ATCC BAA-918 / JCM 12380 / KOD1</strain>
    </source>
</reference>
<evidence type="ECO:0000255" key="1">
    <source>
        <dbReference type="HAMAP-Rule" id="MF_00284"/>
    </source>
</evidence>
<evidence type="ECO:0000305" key="2"/>
<gene>
    <name evidence="1" type="primary">pheT</name>
    <name type="ordered locus">TK0925</name>
</gene>
<feature type="chain" id="PRO_0000127010" description="Phenylalanine--tRNA ligase beta subunit">
    <location>
        <begin position="1"/>
        <end position="574"/>
    </location>
</feature>
<feature type="domain" description="B5" evidence="1">
    <location>
        <begin position="278"/>
        <end position="353"/>
    </location>
</feature>
<feature type="binding site" evidence="1">
    <location>
        <position position="331"/>
    </location>
    <ligand>
        <name>Mg(2+)</name>
        <dbReference type="ChEBI" id="CHEBI:18420"/>
        <note>shared with alpha subunit</note>
    </ligand>
</feature>
<feature type="binding site" evidence="1">
    <location>
        <position position="337"/>
    </location>
    <ligand>
        <name>Mg(2+)</name>
        <dbReference type="ChEBI" id="CHEBI:18420"/>
        <note>shared with alpha subunit</note>
    </ligand>
</feature>
<feature type="binding site" evidence="1">
    <location>
        <position position="340"/>
    </location>
    <ligand>
        <name>Mg(2+)</name>
        <dbReference type="ChEBI" id="CHEBI:18420"/>
        <note>shared with alpha subunit</note>
    </ligand>
</feature>
<feature type="binding site" evidence="1">
    <location>
        <position position="341"/>
    </location>
    <ligand>
        <name>Mg(2+)</name>
        <dbReference type="ChEBI" id="CHEBI:18420"/>
        <note>shared with alpha subunit</note>
    </ligand>
</feature>
<dbReference type="EC" id="6.1.1.20" evidence="1"/>
<dbReference type="EMBL" id="AB093556">
    <property type="protein sequence ID" value="BAC99021.1"/>
    <property type="molecule type" value="Genomic_DNA"/>
</dbReference>
<dbReference type="EMBL" id="AP006878">
    <property type="protein sequence ID" value="BAD85114.1"/>
    <property type="molecule type" value="Genomic_DNA"/>
</dbReference>
<dbReference type="RefSeq" id="WP_011249876.1">
    <property type="nucleotide sequence ID" value="NC_006624.1"/>
</dbReference>
<dbReference type="SMR" id="Q76KA7"/>
<dbReference type="FunCoup" id="Q76KA7">
    <property type="interactions" value="223"/>
</dbReference>
<dbReference type="STRING" id="69014.TK0925"/>
<dbReference type="EnsemblBacteria" id="BAD85114">
    <property type="protein sequence ID" value="BAD85114"/>
    <property type="gene ID" value="TK0925"/>
</dbReference>
<dbReference type="GeneID" id="78447439"/>
<dbReference type="KEGG" id="tko:TK0925"/>
<dbReference type="PATRIC" id="fig|69014.16.peg.903"/>
<dbReference type="eggNOG" id="arCOG00412">
    <property type="taxonomic scope" value="Archaea"/>
</dbReference>
<dbReference type="HOGENOM" id="CLU_020279_3_0_2"/>
<dbReference type="InParanoid" id="Q76KA7"/>
<dbReference type="OrthoDB" id="10073at2157"/>
<dbReference type="PhylomeDB" id="Q76KA7"/>
<dbReference type="Proteomes" id="UP000000536">
    <property type="component" value="Chromosome"/>
</dbReference>
<dbReference type="GO" id="GO:0009328">
    <property type="term" value="C:phenylalanine-tRNA ligase complex"/>
    <property type="evidence" value="ECO:0000318"/>
    <property type="project" value="GO_Central"/>
</dbReference>
<dbReference type="GO" id="GO:0005524">
    <property type="term" value="F:ATP binding"/>
    <property type="evidence" value="ECO:0007669"/>
    <property type="project" value="UniProtKB-UniRule"/>
</dbReference>
<dbReference type="GO" id="GO:0000287">
    <property type="term" value="F:magnesium ion binding"/>
    <property type="evidence" value="ECO:0007669"/>
    <property type="project" value="InterPro"/>
</dbReference>
<dbReference type="GO" id="GO:0004826">
    <property type="term" value="F:phenylalanine-tRNA ligase activity"/>
    <property type="evidence" value="ECO:0007669"/>
    <property type="project" value="UniProtKB-UniRule"/>
</dbReference>
<dbReference type="GO" id="GO:0003723">
    <property type="term" value="F:RNA binding"/>
    <property type="evidence" value="ECO:0007669"/>
    <property type="project" value="InterPro"/>
</dbReference>
<dbReference type="GO" id="GO:0006432">
    <property type="term" value="P:phenylalanyl-tRNA aminoacylation"/>
    <property type="evidence" value="ECO:0000318"/>
    <property type="project" value="GO_Central"/>
</dbReference>
<dbReference type="CDD" id="cd00769">
    <property type="entry name" value="PheRS_beta_core"/>
    <property type="match status" value="1"/>
</dbReference>
<dbReference type="FunFam" id="3.30.56.10:FF:000011">
    <property type="entry name" value="Phenylalanine--tRNA ligase beta subunit"/>
    <property type="match status" value="1"/>
</dbReference>
<dbReference type="FunFam" id="3.30.930.10:FF:000132">
    <property type="entry name" value="Phenylalanine--tRNA ligase beta subunit"/>
    <property type="match status" value="1"/>
</dbReference>
<dbReference type="FunFam" id="3.50.40.10:FF:000003">
    <property type="entry name" value="Phenylalanine--tRNA ligase beta subunit"/>
    <property type="match status" value="1"/>
</dbReference>
<dbReference type="Gene3D" id="3.30.56.10">
    <property type="match status" value="2"/>
</dbReference>
<dbReference type="Gene3D" id="3.30.930.10">
    <property type="entry name" value="Bira Bifunctional Protein, Domain 2"/>
    <property type="match status" value="1"/>
</dbReference>
<dbReference type="Gene3D" id="3.50.40.10">
    <property type="entry name" value="Phenylalanyl-trna Synthetase, Chain B, domain 3"/>
    <property type="match status" value="1"/>
</dbReference>
<dbReference type="HAMAP" id="MF_00284">
    <property type="entry name" value="Phe_tRNA_synth_beta2"/>
    <property type="match status" value="1"/>
</dbReference>
<dbReference type="InterPro" id="IPR045864">
    <property type="entry name" value="aa-tRNA-synth_II/BPL/LPL"/>
</dbReference>
<dbReference type="InterPro" id="IPR005146">
    <property type="entry name" value="B3/B4_tRNA-bd"/>
</dbReference>
<dbReference type="InterPro" id="IPR009061">
    <property type="entry name" value="DNA-bd_dom_put_sf"/>
</dbReference>
<dbReference type="InterPro" id="IPR045060">
    <property type="entry name" value="Phe-tRNA-ligase_IIc_bsu"/>
</dbReference>
<dbReference type="InterPro" id="IPR004531">
    <property type="entry name" value="Phe-tRNA-synth_IIc_bsu_arc_euk"/>
</dbReference>
<dbReference type="InterPro" id="IPR020825">
    <property type="entry name" value="Phe-tRNA_synthase-like_B3/B4"/>
</dbReference>
<dbReference type="InterPro" id="IPR022918">
    <property type="entry name" value="Phe_tRNA_ligase_beta2_arc"/>
</dbReference>
<dbReference type="InterPro" id="IPR041616">
    <property type="entry name" value="PheRS_beta_core"/>
</dbReference>
<dbReference type="InterPro" id="IPR005147">
    <property type="entry name" value="tRNA_synthase_B5-dom"/>
</dbReference>
<dbReference type="NCBIfam" id="TIGR00471">
    <property type="entry name" value="pheT_arch"/>
    <property type="match status" value="1"/>
</dbReference>
<dbReference type="PANTHER" id="PTHR10947:SF0">
    <property type="entry name" value="PHENYLALANINE--TRNA LIGASE BETA SUBUNIT"/>
    <property type="match status" value="1"/>
</dbReference>
<dbReference type="PANTHER" id="PTHR10947">
    <property type="entry name" value="PHENYLALANYL-TRNA SYNTHETASE BETA CHAIN AND LEUCINE-RICH REPEAT-CONTAINING PROTEIN 47"/>
    <property type="match status" value="1"/>
</dbReference>
<dbReference type="Pfam" id="PF03483">
    <property type="entry name" value="B3_4"/>
    <property type="match status" value="1"/>
</dbReference>
<dbReference type="Pfam" id="PF03484">
    <property type="entry name" value="B5"/>
    <property type="match status" value="1"/>
</dbReference>
<dbReference type="Pfam" id="PF17759">
    <property type="entry name" value="tRNA_synthFbeta"/>
    <property type="match status" value="1"/>
</dbReference>
<dbReference type="SMART" id="SM00873">
    <property type="entry name" value="B3_4"/>
    <property type="match status" value="1"/>
</dbReference>
<dbReference type="SMART" id="SM00874">
    <property type="entry name" value="B5"/>
    <property type="match status" value="1"/>
</dbReference>
<dbReference type="SUPFAM" id="SSF55681">
    <property type="entry name" value="Class II aaRS and biotin synthetases"/>
    <property type="match status" value="1"/>
</dbReference>
<dbReference type="SUPFAM" id="SSF56037">
    <property type="entry name" value="PheT/TilS domain"/>
    <property type="match status" value="1"/>
</dbReference>
<dbReference type="SUPFAM" id="SSF46955">
    <property type="entry name" value="Putative DNA-binding domain"/>
    <property type="match status" value="2"/>
</dbReference>
<dbReference type="PROSITE" id="PS51483">
    <property type="entry name" value="B5"/>
    <property type="match status" value="1"/>
</dbReference>
<comment type="catalytic activity">
    <reaction evidence="1">
        <text>tRNA(Phe) + L-phenylalanine + ATP = L-phenylalanyl-tRNA(Phe) + AMP + diphosphate + H(+)</text>
        <dbReference type="Rhea" id="RHEA:19413"/>
        <dbReference type="Rhea" id="RHEA-COMP:9668"/>
        <dbReference type="Rhea" id="RHEA-COMP:9699"/>
        <dbReference type="ChEBI" id="CHEBI:15378"/>
        <dbReference type="ChEBI" id="CHEBI:30616"/>
        <dbReference type="ChEBI" id="CHEBI:33019"/>
        <dbReference type="ChEBI" id="CHEBI:58095"/>
        <dbReference type="ChEBI" id="CHEBI:78442"/>
        <dbReference type="ChEBI" id="CHEBI:78531"/>
        <dbReference type="ChEBI" id="CHEBI:456215"/>
        <dbReference type="EC" id="6.1.1.20"/>
    </reaction>
</comment>
<comment type="cofactor">
    <cofactor evidence="1">
        <name>Mg(2+)</name>
        <dbReference type="ChEBI" id="CHEBI:18420"/>
    </cofactor>
</comment>
<comment type="biophysicochemical properties">
    <temperatureDependence>
        <text>Optimum temperature is 95 degrees Celsius.</text>
    </temperatureDependence>
</comment>
<comment type="subunit">
    <text evidence="1">Tetramer of two alpha and two beta subunits.</text>
</comment>
<comment type="subcellular location">
    <subcellularLocation>
        <location evidence="1">Cytoplasm</location>
    </subcellularLocation>
</comment>
<comment type="similarity">
    <text evidence="1 2">Belongs to the phenylalanyl-tRNA synthetase beta subunit family. Type 2 subfamily.</text>
</comment>
<keyword id="KW-0030">Aminoacyl-tRNA synthetase</keyword>
<keyword id="KW-0067">ATP-binding</keyword>
<keyword id="KW-0963">Cytoplasm</keyword>
<keyword id="KW-0436">Ligase</keyword>
<keyword id="KW-0460">Magnesium</keyword>
<keyword id="KW-0479">Metal-binding</keyword>
<keyword id="KW-0547">Nucleotide-binding</keyword>
<keyword id="KW-0648">Protein biosynthesis</keyword>
<keyword id="KW-1185">Reference proteome</keyword>
<organism>
    <name type="scientific">Thermococcus kodakarensis (strain ATCC BAA-918 / JCM 12380 / KOD1)</name>
    <name type="common">Pyrococcus kodakaraensis (strain KOD1)</name>
    <dbReference type="NCBI Taxonomy" id="69014"/>
    <lineage>
        <taxon>Archaea</taxon>
        <taxon>Methanobacteriati</taxon>
        <taxon>Methanobacteriota</taxon>
        <taxon>Thermococci</taxon>
        <taxon>Thermococcales</taxon>
        <taxon>Thermococcaceae</taxon>
        <taxon>Thermococcus</taxon>
    </lineage>
</organism>